<name>BIOB_THEYD</name>
<proteinExistence type="inferred from homology"/>
<sequence>MKPEIQSSLEYYSDLIEHMDDSHIYSLIFQANSIREKYKGKKIELCAIVNAKSGLCSEDCAFCAQSSRYKTNSPVYSLLEKDEIVKKALEAKKYGVKRFSIVISGKKPSKKELEKIGNSIEAIKKIGIYPCASLGLLEYDEICYLRDKGLERLHCNIETSERFFSNICTTHKFSDKVKTLENANKTGLSICSGGVFGIGESWDDRKEMAEFLKNLNVDSIPINFLTPIKGTPLESKKPLNPMEALRIIILFRLILPDKDIRVCGGRPLLGEFASWIFIAGANALMTGNYLTTTGRHYSDDIKFIEAHGLEVDSVVS</sequence>
<dbReference type="EC" id="2.8.1.6" evidence="1"/>
<dbReference type="EMBL" id="CP001147">
    <property type="protein sequence ID" value="ACI22036.1"/>
    <property type="molecule type" value="Genomic_DNA"/>
</dbReference>
<dbReference type="RefSeq" id="WP_012546730.1">
    <property type="nucleotide sequence ID" value="NC_011296.1"/>
</dbReference>
<dbReference type="RefSeq" id="YP_002248650.1">
    <property type="nucleotide sequence ID" value="NC_011296.1"/>
</dbReference>
<dbReference type="SMR" id="B5YK85"/>
<dbReference type="FunCoup" id="B5YK85">
    <property type="interactions" value="307"/>
</dbReference>
<dbReference type="STRING" id="289376.THEYE_A0809"/>
<dbReference type="EnsemblBacteria" id="ACI22036">
    <property type="protein sequence ID" value="ACI22036"/>
    <property type="gene ID" value="THEYE_A0809"/>
</dbReference>
<dbReference type="KEGG" id="tye:THEYE_A0809"/>
<dbReference type="PATRIC" id="fig|289376.4.peg.799"/>
<dbReference type="eggNOG" id="COG0502">
    <property type="taxonomic scope" value="Bacteria"/>
</dbReference>
<dbReference type="HOGENOM" id="CLU_033172_2_1_0"/>
<dbReference type="InParanoid" id="B5YK85"/>
<dbReference type="OrthoDB" id="9786826at2"/>
<dbReference type="UniPathway" id="UPA00078">
    <property type="reaction ID" value="UER00162"/>
</dbReference>
<dbReference type="Proteomes" id="UP000000718">
    <property type="component" value="Chromosome"/>
</dbReference>
<dbReference type="GO" id="GO:0051537">
    <property type="term" value="F:2 iron, 2 sulfur cluster binding"/>
    <property type="evidence" value="ECO:0000318"/>
    <property type="project" value="GO_Central"/>
</dbReference>
<dbReference type="GO" id="GO:0051539">
    <property type="term" value="F:4 iron, 4 sulfur cluster binding"/>
    <property type="evidence" value="ECO:0007669"/>
    <property type="project" value="UniProtKB-KW"/>
</dbReference>
<dbReference type="GO" id="GO:0004076">
    <property type="term" value="F:biotin synthase activity"/>
    <property type="evidence" value="ECO:0000318"/>
    <property type="project" value="GO_Central"/>
</dbReference>
<dbReference type="GO" id="GO:0005506">
    <property type="term" value="F:iron ion binding"/>
    <property type="evidence" value="ECO:0007669"/>
    <property type="project" value="UniProtKB-UniRule"/>
</dbReference>
<dbReference type="GO" id="GO:0009102">
    <property type="term" value="P:biotin biosynthetic process"/>
    <property type="evidence" value="ECO:0000318"/>
    <property type="project" value="GO_Central"/>
</dbReference>
<dbReference type="CDD" id="cd01335">
    <property type="entry name" value="Radical_SAM"/>
    <property type="match status" value="1"/>
</dbReference>
<dbReference type="FunFam" id="3.20.20.70:FF:000026">
    <property type="entry name" value="Biotin synthase"/>
    <property type="match status" value="1"/>
</dbReference>
<dbReference type="Gene3D" id="3.20.20.70">
    <property type="entry name" value="Aldolase class I"/>
    <property type="match status" value="1"/>
</dbReference>
<dbReference type="HAMAP" id="MF_01694">
    <property type="entry name" value="BioB"/>
    <property type="match status" value="1"/>
</dbReference>
<dbReference type="InterPro" id="IPR013785">
    <property type="entry name" value="Aldolase_TIM"/>
</dbReference>
<dbReference type="InterPro" id="IPR010722">
    <property type="entry name" value="BATS_dom"/>
</dbReference>
<dbReference type="InterPro" id="IPR002684">
    <property type="entry name" value="Biotin_synth/BioAB"/>
</dbReference>
<dbReference type="InterPro" id="IPR024177">
    <property type="entry name" value="Biotin_synthase"/>
</dbReference>
<dbReference type="InterPro" id="IPR006638">
    <property type="entry name" value="Elp3/MiaA/NifB-like_rSAM"/>
</dbReference>
<dbReference type="InterPro" id="IPR007197">
    <property type="entry name" value="rSAM"/>
</dbReference>
<dbReference type="NCBIfam" id="TIGR00433">
    <property type="entry name" value="bioB"/>
    <property type="match status" value="1"/>
</dbReference>
<dbReference type="PANTHER" id="PTHR22976">
    <property type="entry name" value="BIOTIN SYNTHASE"/>
    <property type="match status" value="1"/>
</dbReference>
<dbReference type="PANTHER" id="PTHR22976:SF2">
    <property type="entry name" value="BIOTIN SYNTHASE, MITOCHONDRIAL"/>
    <property type="match status" value="1"/>
</dbReference>
<dbReference type="Pfam" id="PF06968">
    <property type="entry name" value="BATS"/>
    <property type="match status" value="1"/>
</dbReference>
<dbReference type="Pfam" id="PF04055">
    <property type="entry name" value="Radical_SAM"/>
    <property type="match status" value="1"/>
</dbReference>
<dbReference type="PIRSF" id="PIRSF001619">
    <property type="entry name" value="Biotin_synth"/>
    <property type="match status" value="1"/>
</dbReference>
<dbReference type="SFLD" id="SFLDG01278">
    <property type="entry name" value="biotin_synthase_like"/>
    <property type="match status" value="1"/>
</dbReference>
<dbReference type="SFLD" id="SFLDS00029">
    <property type="entry name" value="Radical_SAM"/>
    <property type="match status" value="1"/>
</dbReference>
<dbReference type="SMART" id="SM00876">
    <property type="entry name" value="BATS"/>
    <property type="match status" value="1"/>
</dbReference>
<dbReference type="SMART" id="SM00729">
    <property type="entry name" value="Elp3"/>
    <property type="match status" value="1"/>
</dbReference>
<dbReference type="SUPFAM" id="SSF102114">
    <property type="entry name" value="Radical SAM enzymes"/>
    <property type="match status" value="1"/>
</dbReference>
<dbReference type="PROSITE" id="PS51918">
    <property type="entry name" value="RADICAL_SAM"/>
    <property type="match status" value="1"/>
</dbReference>
<protein>
    <recommendedName>
        <fullName evidence="1">Biotin synthase</fullName>
        <ecNumber evidence="1">2.8.1.6</ecNumber>
    </recommendedName>
</protein>
<feature type="chain" id="PRO_0000381688" description="Biotin synthase">
    <location>
        <begin position="1"/>
        <end position="316"/>
    </location>
</feature>
<feature type="domain" description="Radical SAM core" evidence="2">
    <location>
        <begin position="38"/>
        <end position="266"/>
    </location>
</feature>
<feature type="binding site" evidence="1">
    <location>
        <position position="56"/>
    </location>
    <ligand>
        <name>[4Fe-4S] cluster</name>
        <dbReference type="ChEBI" id="CHEBI:49883"/>
        <note>4Fe-4S-S-AdoMet</note>
    </ligand>
</feature>
<feature type="binding site" evidence="1">
    <location>
        <position position="60"/>
    </location>
    <ligand>
        <name>[4Fe-4S] cluster</name>
        <dbReference type="ChEBI" id="CHEBI:49883"/>
        <note>4Fe-4S-S-AdoMet</note>
    </ligand>
</feature>
<feature type="binding site" evidence="1">
    <location>
        <position position="63"/>
    </location>
    <ligand>
        <name>[4Fe-4S] cluster</name>
        <dbReference type="ChEBI" id="CHEBI:49883"/>
        <note>4Fe-4S-S-AdoMet</note>
    </ligand>
</feature>
<feature type="binding site" evidence="1">
    <location>
        <position position="100"/>
    </location>
    <ligand>
        <name>[2Fe-2S] cluster</name>
        <dbReference type="ChEBI" id="CHEBI:190135"/>
    </ligand>
</feature>
<feature type="binding site" evidence="1">
    <location>
        <position position="131"/>
    </location>
    <ligand>
        <name>[2Fe-2S] cluster</name>
        <dbReference type="ChEBI" id="CHEBI:190135"/>
    </ligand>
</feature>
<feature type="binding site" evidence="1">
    <location>
        <position position="191"/>
    </location>
    <ligand>
        <name>[2Fe-2S] cluster</name>
        <dbReference type="ChEBI" id="CHEBI:190135"/>
    </ligand>
</feature>
<feature type="binding site" evidence="1">
    <location>
        <position position="261"/>
    </location>
    <ligand>
        <name>[2Fe-2S] cluster</name>
        <dbReference type="ChEBI" id="CHEBI:190135"/>
    </ligand>
</feature>
<accession>B5YK85</accession>
<keyword id="KW-0001">2Fe-2S</keyword>
<keyword id="KW-0004">4Fe-4S</keyword>
<keyword id="KW-0093">Biotin biosynthesis</keyword>
<keyword id="KW-0408">Iron</keyword>
<keyword id="KW-0411">Iron-sulfur</keyword>
<keyword id="KW-0479">Metal-binding</keyword>
<keyword id="KW-1185">Reference proteome</keyword>
<keyword id="KW-0949">S-adenosyl-L-methionine</keyword>
<keyword id="KW-0808">Transferase</keyword>
<organism>
    <name type="scientific">Thermodesulfovibrio yellowstonii (strain ATCC 51303 / DSM 11347 / YP87)</name>
    <dbReference type="NCBI Taxonomy" id="289376"/>
    <lineage>
        <taxon>Bacteria</taxon>
        <taxon>Pseudomonadati</taxon>
        <taxon>Nitrospirota</taxon>
        <taxon>Thermodesulfovibrionia</taxon>
        <taxon>Thermodesulfovibrionales</taxon>
        <taxon>Thermodesulfovibrionaceae</taxon>
        <taxon>Thermodesulfovibrio</taxon>
    </lineage>
</organism>
<comment type="function">
    <text evidence="1">Catalyzes the conversion of dethiobiotin (DTB) to biotin by the insertion of a sulfur atom into dethiobiotin via a radical-based mechanism.</text>
</comment>
<comment type="catalytic activity">
    <reaction evidence="1">
        <text>(4R,5S)-dethiobiotin + (sulfur carrier)-SH + 2 reduced [2Fe-2S]-[ferredoxin] + 2 S-adenosyl-L-methionine = (sulfur carrier)-H + biotin + 2 5'-deoxyadenosine + 2 L-methionine + 2 oxidized [2Fe-2S]-[ferredoxin]</text>
        <dbReference type="Rhea" id="RHEA:22060"/>
        <dbReference type="Rhea" id="RHEA-COMP:10000"/>
        <dbReference type="Rhea" id="RHEA-COMP:10001"/>
        <dbReference type="Rhea" id="RHEA-COMP:14737"/>
        <dbReference type="Rhea" id="RHEA-COMP:14739"/>
        <dbReference type="ChEBI" id="CHEBI:17319"/>
        <dbReference type="ChEBI" id="CHEBI:29917"/>
        <dbReference type="ChEBI" id="CHEBI:33737"/>
        <dbReference type="ChEBI" id="CHEBI:33738"/>
        <dbReference type="ChEBI" id="CHEBI:57586"/>
        <dbReference type="ChEBI" id="CHEBI:57844"/>
        <dbReference type="ChEBI" id="CHEBI:59789"/>
        <dbReference type="ChEBI" id="CHEBI:64428"/>
        <dbReference type="ChEBI" id="CHEBI:149473"/>
        <dbReference type="EC" id="2.8.1.6"/>
    </reaction>
</comment>
<comment type="cofactor">
    <cofactor evidence="1">
        <name>[4Fe-4S] cluster</name>
        <dbReference type="ChEBI" id="CHEBI:49883"/>
    </cofactor>
    <text evidence="1">Binds 1 [4Fe-4S] cluster. The cluster is coordinated with 3 cysteines and an exchangeable S-adenosyl-L-methionine.</text>
</comment>
<comment type="cofactor">
    <cofactor evidence="1">
        <name>[2Fe-2S] cluster</name>
        <dbReference type="ChEBI" id="CHEBI:190135"/>
    </cofactor>
    <text evidence="1">Binds 1 [2Fe-2S] cluster. The cluster is coordinated with 3 cysteines and 1 arginine.</text>
</comment>
<comment type="pathway">
    <text evidence="1">Cofactor biosynthesis; biotin biosynthesis; biotin from 7,8-diaminononanoate: step 2/2.</text>
</comment>
<comment type="subunit">
    <text evidence="1">Homodimer.</text>
</comment>
<comment type="similarity">
    <text evidence="1">Belongs to the radical SAM superfamily. Biotin synthase family.</text>
</comment>
<reference key="1">
    <citation type="submission" date="2008-08" db="EMBL/GenBank/DDBJ databases">
        <title>The complete genome sequence of Thermodesulfovibrio yellowstonii strain ATCC 51303 / DSM 11347 / YP87.</title>
        <authorList>
            <person name="Dodson R.J."/>
            <person name="Durkin A.S."/>
            <person name="Wu M."/>
            <person name="Eisen J."/>
            <person name="Sutton G."/>
        </authorList>
    </citation>
    <scope>NUCLEOTIDE SEQUENCE [LARGE SCALE GENOMIC DNA]</scope>
    <source>
        <strain>ATCC 51303 / DSM 11347 / YP87</strain>
    </source>
</reference>
<evidence type="ECO:0000255" key="1">
    <source>
        <dbReference type="HAMAP-Rule" id="MF_01694"/>
    </source>
</evidence>
<evidence type="ECO:0000255" key="2">
    <source>
        <dbReference type="PROSITE-ProRule" id="PRU01266"/>
    </source>
</evidence>
<gene>
    <name evidence="1" type="primary">bioB</name>
    <name type="ordered locus">THEYE_A0809</name>
</gene>